<feature type="chain" id="PRO_0000454600" description="Dienlactone hydrolase 1">
    <location>
        <begin position="1"/>
        <end position="261"/>
    </location>
</feature>
<feature type="active site" evidence="1">
    <location>
        <position position="147"/>
    </location>
</feature>
<feature type="active site" evidence="1">
    <location>
        <position position="194"/>
    </location>
</feature>
<feature type="active site" evidence="1">
    <location>
        <position position="226"/>
    </location>
</feature>
<gene>
    <name evidence="6" type="primary">DLH1</name>
    <name type="ORF">FVEG_08290</name>
</gene>
<sequence length="261" mass="29030">MADINDPVLAKPADLCCLKGDFHRGEPTGSIIQIEGVDTYVAKPDPKFTNGNVLLFFPDAFGLHINSKLMMDAYAACGYLTLGVDYFLGDAVTKYSASPLNDPNFDLAAWSAKHLLPSEEIAREWVKNIKAKYGNDGKVKFGCIGYCWGARIVLQQLSDGGICSAGAIAHPSFVNESHVQKSKAPVAFSVPATDKLFSNEARTRVIEICTEKQQRFNMQVFSHVGHGFASRTRLTDPYELWAKEQHFKGFIEWLDFWLARE</sequence>
<evidence type="ECO:0000250" key="1">
    <source>
        <dbReference type="UniProtKB" id="P0A114"/>
    </source>
</evidence>
<evidence type="ECO:0000269" key="2">
    <source>
    </source>
</evidence>
<evidence type="ECO:0000269" key="3">
    <source>
    </source>
</evidence>
<evidence type="ECO:0000269" key="4">
    <source>
    </source>
</evidence>
<evidence type="ECO:0000269" key="5">
    <source>
    </source>
</evidence>
<evidence type="ECO:0000303" key="6">
    <source>
    </source>
</evidence>
<evidence type="ECO:0000305" key="7"/>
<evidence type="ECO:0000305" key="8">
    <source>
    </source>
</evidence>
<proteinExistence type="evidence at transcript level"/>
<comment type="function">
    <text evidence="2 3 4 5 8">Dienlactone hydrolase; part of the Fusarium detoxification of benzoxazolinone cluster 1 (FDB1) involved in the degradation of benzoxazolinones produced by the host plant (PubMed:19302487, PubMed:26808652). Maize, wheat, and rye produce the 2 benzoxazinone phytoanticipins 2,4-dihy-droxy-7-methoxy-1,4-benzoxazin-3-one (DIMBOA) and 2,4-dihydroxy-1,4-benzoxazin-3-one (DIBOA) that, due to their inherent instability once released, spontaneously degrade to the more stable corresponding benzoxazolinones, 6-methoxy-2-benzoxazolinone (MBOA) and 2-benzoxazolinone (BOA), respectively (PubMed:11876429). The first step in the detoxification of benzoxazolinones involves the hydrolysis of the cyclic ester bond of benzoxazolinones by the FDB1 cluster gamma-lactamase MBL1 to aminophenols (PubMed:12788712, PubMed:26808652). MBL1 is able to convert BOA into 2-aminophenol (2-AP), as well as MBOA into 5-methoxy-2-aminophenol (2-AMP) (PubMed:12788712, PubMed:26808652). The FDB2 cluster N-malonyltransferase FDB2/NAT1 then metabolizes aminophenols via N-malonylation to non-toxic malonamic acids (PubMed:12788712, PubMed:19302487). FDB2/NAT1 converts 2-AP into N-(2-hydroxyphenyl) malonamic acid (HPMA) and 2-AMP into N-(2-hydroxy-4-methoxyphenyl) malonamic acid (HMPMA) (PubMed:12788712, PubMed:19302487). The duplicated dienlactone hydrolases DLH1 and DLH2 may provide redundant function for hydrolyzing the lactone moiety in the BOA molecule (Probable). The roles of the amidases and other enzymes encoded by the 2 FDB clusters have not been identified so far (Probable).</text>
</comment>
<comment type="pathway">
    <text evidence="8">Xenobiotic degradation.</text>
</comment>
<comment type="induction">
    <text evidence="5">Expression is induced in response to 2-benzoxasolinone (BOA) exposure.</text>
</comment>
<comment type="disruption phenotype">
    <text evidence="5">Retains 2-benzoxazolinone (BOA)-tolerance and metabolic degradation capability (PubMed:26808652). Does not affect the virulence against maize seedlings (PubMed:26808652).</text>
</comment>
<comment type="miscellaneous">
    <text evidence="8">Fusarium verticillioides possesses 2 unlinked loci, FDB1 and FDB2, necessary for detoxification of antimicrobial compounds produced by maize, including 2-benzoxazolinone (BOA) (Probable). The FDB2 cluster arose as a duplication of the FDB1 cluster with rearrangement and expansion by incorporating additional genes (Probable).</text>
</comment>
<comment type="similarity">
    <text evidence="7">Belongs to the dienelactone hydrolase family.</text>
</comment>
<accession>W7MAD3</accession>
<dbReference type="EC" id="3.1.1.-" evidence="8"/>
<dbReference type="EMBL" id="CM000587">
    <property type="protein sequence ID" value="EWG48578.1"/>
    <property type="molecule type" value="Genomic_DNA"/>
</dbReference>
<dbReference type="RefSeq" id="XP_018754769.1">
    <property type="nucleotide sequence ID" value="XM_018897182.1"/>
</dbReference>
<dbReference type="SMR" id="W7MAD3"/>
<dbReference type="ESTHER" id="gibm7-dlh1">
    <property type="family name" value="Dienelactone_hydrolase"/>
</dbReference>
<dbReference type="EnsemblFungi" id="FVEG_08290T0">
    <property type="protein sequence ID" value="FVEG_08290T0"/>
    <property type="gene ID" value="FVEG_08290"/>
</dbReference>
<dbReference type="GeneID" id="30066032"/>
<dbReference type="KEGG" id="fvr:FVEG_08290"/>
<dbReference type="VEuPathDB" id="FungiDB:FVEG_08290"/>
<dbReference type="eggNOG" id="KOG3043">
    <property type="taxonomic scope" value="Eukaryota"/>
</dbReference>
<dbReference type="HOGENOM" id="CLU_054590_2_1_1"/>
<dbReference type="OMA" id="ICTEKQQ"/>
<dbReference type="OrthoDB" id="2354at110618"/>
<dbReference type="Proteomes" id="UP000009096">
    <property type="component" value="Chromosome 10"/>
</dbReference>
<dbReference type="GO" id="GO:0016787">
    <property type="term" value="F:hydrolase activity"/>
    <property type="evidence" value="ECO:0007669"/>
    <property type="project" value="UniProtKB-KW"/>
</dbReference>
<dbReference type="Gene3D" id="3.40.50.1820">
    <property type="entry name" value="alpha/beta hydrolase"/>
    <property type="match status" value="1"/>
</dbReference>
<dbReference type="InterPro" id="IPR029058">
    <property type="entry name" value="AB_hydrolase_fold"/>
</dbReference>
<dbReference type="InterPro" id="IPR002925">
    <property type="entry name" value="Dienelactn_hydro"/>
</dbReference>
<dbReference type="PANTHER" id="PTHR17630">
    <property type="entry name" value="DIENELACTONE HYDROLASE"/>
    <property type="match status" value="1"/>
</dbReference>
<dbReference type="PANTHER" id="PTHR17630:SF44">
    <property type="entry name" value="PROTEIN AIM2"/>
    <property type="match status" value="1"/>
</dbReference>
<dbReference type="Pfam" id="PF01738">
    <property type="entry name" value="DLH"/>
    <property type="match status" value="1"/>
</dbReference>
<dbReference type="SUPFAM" id="SSF53474">
    <property type="entry name" value="alpha/beta-Hydrolases"/>
    <property type="match status" value="1"/>
</dbReference>
<reference key="1">
    <citation type="journal article" date="2010" name="Nature">
        <title>Comparative genomics reveals mobile pathogenicity chromosomes in Fusarium.</title>
        <authorList>
            <person name="Ma L.-J."/>
            <person name="van der Does H.C."/>
            <person name="Borkovich K.A."/>
            <person name="Coleman J.J."/>
            <person name="Daboussi M.-J."/>
            <person name="Di Pietro A."/>
            <person name="Dufresne M."/>
            <person name="Freitag M."/>
            <person name="Grabherr M."/>
            <person name="Henrissat B."/>
            <person name="Houterman P.M."/>
            <person name="Kang S."/>
            <person name="Shim W.-B."/>
            <person name="Woloshuk C."/>
            <person name="Xie X."/>
            <person name="Xu J.-R."/>
            <person name="Antoniw J."/>
            <person name="Baker S.E."/>
            <person name="Bluhm B.H."/>
            <person name="Breakspear A."/>
            <person name="Brown D.W."/>
            <person name="Butchko R.A.E."/>
            <person name="Chapman S."/>
            <person name="Coulson R."/>
            <person name="Coutinho P.M."/>
            <person name="Danchin E.G.J."/>
            <person name="Diener A."/>
            <person name="Gale L.R."/>
            <person name="Gardiner D.M."/>
            <person name="Goff S."/>
            <person name="Hammond-Kosack K.E."/>
            <person name="Hilburn K."/>
            <person name="Hua-Van A."/>
            <person name="Jonkers W."/>
            <person name="Kazan K."/>
            <person name="Kodira C.D."/>
            <person name="Koehrsen M."/>
            <person name="Kumar L."/>
            <person name="Lee Y.-H."/>
            <person name="Li L."/>
            <person name="Manners J.M."/>
            <person name="Miranda-Saavedra D."/>
            <person name="Mukherjee M."/>
            <person name="Park G."/>
            <person name="Park J."/>
            <person name="Park S.-Y."/>
            <person name="Proctor R.H."/>
            <person name="Regev A."/>
            <person name="Ruiz-Roldan M.C."/>
            <person name="Sain D."/>
            <person name="Sakthikumar S."/>
            <person name="Sykes S."/>
            <person name="Schwartz D.C."/>
            <person name="Turgeon B.G."/>
            <person name="Wapinski I."/>
            <person name="Yoder O."/>
            <person name="Young S."/>
            <person name="Zeng Q."/>
            <person name="Zhou S."/>
            <person name="Galagan J."/>
            <person name="Cuomo C.A."/>
            <person name="Kistler H.C."/>
            <person name="Rep M."/>
        </authorList>
    </citation>
    <scope>NUCLEOTIDE SEQUENCE [LARGE SCALE GENOMIC DNA]</scope>
    <source>
        <strain>M3125 / FGSC 7600</strain>
    </source>
</reference>
<reference key="2">
    <citation type="journal article" date="2002" name="Mol. Plant Microbe Interact.">
        <title>Fdb1 and Fdb2, Fusarium verticillioides loci necessary for detoxification of preformed antimicrobials from corn.</title>
        <authorList>
            <person name="Glenn A.E."/>
            <person name="Gold S.E."/>
            <person name="Bacon C.W."/>
        </authorList>
    </citation>
    <scope>FUNCTION</scope>
</reference>
<reference key="3">
    <citation type="journal article" date="2003" name="Appl. Environ. Microbiol.">
        <title>Identification of intermediate and branch metabolites resulting from biotransformation of 2-benzoxazolinone by Fusarium verticillioides.</title>
        <authorList>
            <person name="Glenn A.E."/>
            <person name="Meredith F.I."/>
            <person name="Morrison W.H. III"/>
            <person name="Bacon C.W."/>
        </authorList>
    </citation>
    <scope>FUNCTION</scope>
</reference>
<reference key="4">
    <citation type="journal article" date="2009" name="J. Appl. Microbiol.">
        <title>FDB2 encodes a member of the arylamine N-acetyltransferase family and is necessary for biotransformation of benzoxazolinones by Fusarium verticillioides.</title>
        <authorList>
            <person name="Glenn A.E."/>
            <person name="Bacon C.W."/>
        </authorList>
    </citation>
    <scope>FUNCTION</scope>
</reference>
<reference key="5">
    <citation type="journal article" date="2016" name="PLoS ONE">
        <title>Two horizontally transferred xenobiotic resistance gene clusters associated with detoxification of benzoxazolinones by Fusarium species.</title>
        <authorList>
            <person name="Glenn A.E."/>
            <person name="Davis C.B."/>
            <person name="Gao M."/>
            <person name="Gold S.E."/>
            <person name="Mitchell T.R."/>
            <person name="Proctor R.H."/>
            <person name="Stewart J.E."/>
            <person name="Snook M.E."/>
        </authorList>
    </citation>
    <scope>FUNCTION</scope>
    <scope>DISRUPTION PHENOTYPE</scope>
    <scope>INDUCTION</scope>
    <scope>PATHWAY</scope>
</reference>
<name>DLH1_GIBM7</name>
<organism>
    <name type="scientific">Gibberella moniliformis (strain M3125 / FGSC 7600)</name>
    <name type="common">Maize ear and stalk rot fungus</name>
    <name type="synonym">Fusarium verticillioides</name>
    <dbReference type="NCBI Taxonomy" id="334819"/>
    <lineage>
        <taxon>Eukaryota</taxon>
        <taxon>Fungi</taxon>
        <taxon>Dikarya</taxon>
        <taxon>Ascomycota</taxon>
        <taxon>Pezizomycotina</taxon>
        <taxon>Sordariomycetes</taxon>
        <taxon>Hypocreomycetidae</taxon>
        <taxon>Hypocreales</taxon>
        <taxon>Nectriaceae</taxon>
        <taxon>Fusarium</taxon>
        <taxon>Fusarium fujikuroi species complex</taxon>
    </lineage>
</organism>
<protein>
    <recommendedName>
        <fullName evidence="6">Dienlactone hydrolase 1</fullName>
        <ecNumber evidence="8">3.1.1.-</ecNumber>
    </recommendedName>
    <alternativeName>
        <fullName evidence="6">Fusarium detoxification of benzoxazolinone cluster 1 protein DLH1</fullName>
        <shortName evidence="6">FDB1 cluster protein DLH1</shortName>
    </alternativeName>
</protein>
<keyword id="KW-0378">Hydrolase</keyword>
<keyword id="KW-1185">Reference proteome</keyword>